<comment type="function">
    <text evidence="1">Rab9 effector required for endosome to trans-Golgi network (TGN) transport.</text>
</comment>
<comment type="subunit">
    <text evidence="1">Interacts with PIKFYVE; the interaction recruits RABEPK to the endosomal membrane. Interacts with RAB9 in its GTP-bound conformation.</text>
</comment>
<comment type="subcellular location">
    <subcellularLocation>
        <location evidence="1">Cytoplasm</location>
    </subcellularLocation>
    <subcellularLocation>
        <location evidence="1">Endosome membrane</location>
    </subcellularLocation>
    <text evidence="1">Interaction with PIKFYVE and subsequent phosphorylation recruits it to the endosomal membrane.</text>
</comment>
<comment type="PTM">
    <text evidence="1">Phosphorylated on Ser residues by PIKFYVE.</text>
</comment>
<accession>Q4V8F4</accession>
<organism>
    <name type="scientific">Rattus norvegicus</name>
    <name type="common">Rat</name>
    <dbReference type="NCBI Taxonomy" id="10116"/>
    <lineage>
        <taxon>Eukaryota</taxon>
        <taxon>Metazoa</taxon>
        <taxon>Chordata</taxon>
        <taxon>Craniata</taxon>
        <taxon>Vertebrata</taxon>
        <taxon>Euteleostomi</taxon>
        <taxon>Mammalia</taxon>
        <taxon>Eutheria</taxon>
        <taxon>Euarchontoglires</taxon>
        <taxon>Glires</taxon>
        <taxon>Rodentia</taxon>
        <taxon>Myomorpha</taxon>
        <taxon>Muroidea</taxon>
        <taxon>Muridae</taxon>
        <taxon>Murinae</taxon>
        <taxon>Rattus</taxon>
    </lineage>
</organism>
<sequence length="372" mass="40152">MKQLPILEPGDKPRKAAWYTLTCPGDKPCPRVGHSCSYFPPVGEAEKGKVFIVGGANPNQSFSDVHTMDLGTHRWDTATREGLLPRYEHASFLPSCSPHSIWVFGGADQSGNRNCLQVMNPEARTWSTPEVTGCPPSPRTFHTSSAAIGNHLYVFGGGERGAQPVQDVKLHVFDANTLTWAQPETHGSPPSPRHGHAMVAAGTKLFIHGGLAGDRFFDDLHCIDIGDMSWQKLGPTGTAPVGCAAHAAVAVGHHVYVFGGMTATGALNTMYKYHTEKQHWTILQFDTSLPPGRLDHSMCVIPWPVMSASDTEDSGSVILSLQDEKGDAAEKPETRSGGSREESPTTLLLCFVFGGMNTEGEIYDDCLVTVVD</sequence>
<reference key="1">
    <citation type="journal article" date="2004" name="Genome Res.">
        <title>The status, quality, and expansion of the NIH full-length cDNA project: the Mammalian Gene Collection (MGC).</title>
        <authorList>
            <consortium name="The MGC Project Team"/>
        </authorList>
    </citation>
    <scope>NUCLEOTIDE SEQUENCE [LARGE SCALE MRNA]</scope>
    <source>
        <tissue>Testis</tissue>
    </source>
</reference>
<proteinExistence type="evidence at transcript level"/>
<feature type="chain" id="PRO_0000280618" description="Rab9 effector protein with kelch motifs">
    <location>
        <begin position="1"/>
        <end position="372"/>
    </location>
</feature>
<feature type="repeat" description="Kelch 1">
    <location>
        <begin position="49"/>
        <end position="95"/>
    </location>
</feature>
<feature type="repeat" description="Kelch 2">
    <location>
        <begin position="100"/>
        <end position="146"/>
    </location>
</feature>
<feature type="repeat" description="Kelch 3">
    <location>
        <begin position="151"/>
        <end position="203"/>
    </location>
</feature>
<feature type="repeat" description="Kelch 4">
    <location>
        <begin position="204"/>
        <end position="250"/>
    </location>
</feature>
<feature type="repeat" description="Kelch 5">
    <location>
        <begin position="254"/>
        <end position="303"/>
    </location>
</feature>
<feature type="repeat" description="Kelch 6">
    <location>
        <begin position="349"/>
        <end position="372"/>
    </location>
</feature>
<feature type="region of interest" description="Disordered" evidence="2">
    <location>
        <begin position="321"/>
        <end position="342"/>
    </location>
</feature>
<feature type="compositionally biased region" description="Basic and acidic residues" evidence="2">
    <location>
        <begin position="322"/>
        <end position="342"/>
    </location>
</feature>
<gene>
    <name type="primary">Rabepk</name>
</gene>
<protein>
    <recommendedName>
        <fullName>Rab9 effector protein with kelch motifs</fullName>
    </recommendedName>
</protein>
<keyword id="KW-0963">Cytoplasm</keyword>
<keyword id="KW-0967">Endosome</keyword>
<keyword id="KW-0880">Kelch repeat</keyword>
<keyword id="KW-0472">Membrane</keyword>
<keyword id="KW-0597">Phosphoprotein</keyword>
<keyword id="KW-1185">Reference proteome</keyword>
<keyword id="KW-0677">Repeat</keyword>
<evidence type="ECO:0000250" key="1">
    <source>
        <dbReference type="UniProtKB" id="Q7Z6M1"/>
    </source>
</evidence>
<evidence type="ECO:0000256" key="2">
    <source>
        <dbReference type="SAM" id="MobiDB-lite"/>
    </source>
</evidence>
<dbReference type="EMBL" id="BC097415">
    <property type="protein sequence ID" value="AAH97415.1"/>
    <property type="molecule type" value="mRNA"/>
</dbReference>
<dbReference type="RefSeq" id="NP_001020042.2">
    <property type="nucleotide sequence ID" value="NM_001024871.1"/>
</dbReference>
<dbReference type="RefSeq" id="XP_006234017.1">
    <property type="nucleotide sequence ID" value="XM_006233955.1"/>
</dbReference>
<dbReference type="RefSeq" id="XP_006234019.1">
    <property type="nucleotide sequence ID" value="XM_006233957.5"/>
</dbReference>
<dbReference type="RefSeq" id="XP_006234020.1">
    <property type="nucleotide sequence ID" value="XM_006233958.3"/>
</dbReference>
<dbReference type="RefSeq" id="XP_063139582.1">
    <property type="nucleotide sequence ID" value="XM_063283512.1"/>
</dbReference>
<dbReference type="SMR" id="Q4V8F4"/>
<dbReference type="FunCoup" id="Q4V8F4">
    <property type="interactions" value="1629"/>
</dbReference>
<dbReference type="STRING" id="10116.ENSRNOP00000025194"/>
<dbReference type="PhosphoSitePlus" id="Q4V8F4"/>
<dbReference type="jPOST" id="Q4V8F4"/>
<dbReference type="PaxDb" id="10116-ENSRNOP00000025194"/>
<dbReference type="GeneID" id="296649"/>
<dbReference type="KEGG" id="rno:296649"/>
<dbReference type="UCSC" id="RGD:1310612">
    <property type="organism name" value="rat"/>
</dbReference>
<dbReference type="AGR" id="RGD:1310612"/>
<dbReference type="CTD" id="10244"/>
<dbReference type="RGD" id="1310612">
    <property type="gene designation" value="Rabepk"/>
</dbReference>
<dbReference type="VEuPathDB" id="HostDB:ENSRNOG00000018591"/>
<dbReference type="eggNOG" id="KOG0379">
    <property type="taxonomic scope" value="Eukaryota"/>
</dbReference>
<dbReference type="HOGENOM" id="CLU_045313_0_0_1"/>
<dbReference type="InParanoid" id="Q4V8F4"/>
<dbReference type="OrthoDB" id="10251809at2759"/>
<dbReference type="PhylomeDB" id="Q4V8F4"/>
<dbReference type="TreeFam" id="TF329153"/>
<dbReference type="Reactome" id="R-RNO-6811440">
    <property type="pathway name" value="Retrograde transport at the Trans-Golgi-Network"/>
</dbReference>
<dbReference type="PRO" id="PR:Q4V8F4"/>
<dbReference type="Proteomes" id="UP000002494">
    <property type="component" value="Chromosome 3"/>
</dbReference>
<dbReference type="Bgee" id="ENSRNOG00000018591">
    <property type="expression patterns" value="Expressed in testis and 20 other cell types or tissues"/>
</dbReference>
<dbReference type="GO" id="GO:0010008">
    <property type="term" value="C:endosome membrane"/>
    <property type="evidence" value="ECO:0007669"/>
    <property type="project" value="UniProtKB-SubCell"/>
</dbReference>
<dbReference type="Gene3D" id="2.120.10.80">
    <property type="entry name" value="Kelch-type beta propeller"/>
    <property type="match status" value="2"/>
</dbReference>
<dbReference type="InterPro" id="IPR011043">
    <property type="entry name" value="Gal_Oxase/kelch_b-propeller"/>
</dbReference>
<dbReference type="InterPro" id="IPR015915">
    <property type="entry name" value="Kelch-typ_b-propeller"/>
</dbReference>
<dbReference type="InterPro" id="IPR052124">
    <property type="entry name" value="Rab9_kelch_effector"/>
</dbReference>
<dbReference type="PANTHER" id="PTHR46647">
    <property type="entry name" value="RAB9 EFFECTOR PROTEIN WITH KELCH MOTIFS"/>
    <property type="match status" value="1"/>
</dbReference>
<dbReference type="PANTHER" id="PTHR46647:SF1">
    <property type="entry name" value="RAB9 EFFECTOR PROTEIN WITH KELCH MOTIFS"/>
    <property type="match status" value="1"/>
</dbReference>
<dbReference type="Pfam" id="PF24681">
    <property type="entry name" value="Kelch_KLHDC2_KLHL20_DRC7"/>
    <property type="match status" value="1"/>
</dbReference>
<dbReference type="SUPFAM" id="SSF50965">
    <property type="entry name" value="Galactose oxidase, central domain"/>
    <property type="match status" value="1"/>
</dbReference>
<name>RABEK_RAT</name>